<organism>
    <name type="scientific">Aspergillus fumigatus (strain ATCC MYA-4609 / CBS 101355 / FGSC A1100 / Af293)</name>
    <name type="common">Neosartorya fumigata</name>
    <dbReference type="NCBI Taxonomy" id="330879"/>
    <lineage>
        <taxon>Eukaryota</taxon>
        <taxon>Fungi</taxon>
        <taxon>Dikarya</taxon>
        <taxon>Ascomycota</taxon>
        <taxon>Pezizomycotina</taxon>
        <taxon>Eurotiomycetes</taxon>
        <taxon>Eurotiomycetidae</taxon>
        <taxon>Eurotiales</taxon>
        <taxon>Aspergillaceae</taxon>
        <taxon>Aspergillus</taxon>
        <taxon>Aspergillus subgen. Fumigati</taxon>
    </lineage>
</organism>
<protein>
    <recommendedName>
        <fullName evidence="12">Monooxygenase af470</fullName>
        <ecNumber evidence="7">1.13.1.-</ecNumber>
    </recommendedName>
    <alternativeName>
        <fullName evidence="11">Fumagillin biosynthesis antibiotic biosynthesis monooxygenase superfamily monooxygenase</fullName>
        <shortName evidence="11">Fma-ABM</shortName>
    </alternativeName>
</protein>
<evidence type="ECO:0000269" key="1">
    <source>
    </source>
</evidence>
<evidence type="ECO:0000269" key="2">
    <source>
    </source>
</evidence>
<evidence type="ECO:0000269" key="3">
    <source>
    </source>
</evidence>
<evidence type="ECO:0000269" key="4">
    <source>
    </source>
</evidence>
<evidence type="ECO:0000269" key="5">
    <source>
    </source>
</evidence>
<evidence type="ECO:0000269" key="6">
    <source>
    </source>
</evidence>
<evidence type="ECO:0000269" key="7">
    <source>
    </source>
</evidence>
<evidence type="ECO:0000269" key="8">
    <source>
    </source>
</evidence>
<evidence type="ECO:0000303" key="9">
    <source>
    </source>
</evidence>
<evidence type="ECO:0000303" key="10">
    <source>
    </source>
</evidence>
<evidence type="ECO:0000303" key="11">
    <source>
    </source>
</evidence>
<evidence type="ECO:0000305" key="12"/>
<evidence type="ECO:0000305" key="13">
    <source>
    </source>
</evidence>
<keyword id="KW-0503">Monooxygenase</keyword>
<keyword id="KW-0560">Oxidoreductase</keyword>
<keyword id="KW-1185">Reference proteome</keyword>
<dbReference type="EC" id="1.13.1.-" evidence="7"/>
<dbReference type="EMBL" id="AAHF01000014">
    <property type="protein sequence ID" value="EAL85120.1"/>
    <property type="molecule type" value="Genomic_DNA"/>
</dbReference>
<dbReference type="RefSeq" id="XP_747158.1">
    <property type="nucleotide sequence ID" value="XM_742065.1"/>
</dbReference>
<dbReference type="STRING" id="330879.Q4WAZ2"/>
<dbReference type="EnsemblFungi" id="EAL85120">
    <property type="protein sequence ID" value="EAL85120"/>
    <property type="gene ID" value="AFUA_8G00470"/>
</dbReference>
<dbReference type="GeneID" id="3504546"/>
<dbReference type="KEGG" id="afm:AFUA_8G00470"/>
<dbReference type="VEuPathDB" id="FungiDB:Afu8g00470"/>
<dbReference type="eggNOG" id="ENOG502SKYH">
    <property type="taxonomic scope" value="Eukaryota"/>
</dbReference>
<dbReference type="HOGENOM" id="CLU_053354_1_0_1"/>
<dbReference type="InParanoid" id="Q4WAZ2"/>
<dbReference type="OMA" id="IHKFAHE"/>
<dbReference type="OrthoDB" id="3202396at2759"/>
<dbReference type="BioCyc" id="MetaCyc:MONOMER-124250"/>
<dbReference type="UniPathway" id="UPA00213"/>
<dbReference type="Proteomes" id="UP000002530">
    <property type="component" value="Chromosome 8"/>
</dbReference>
<dbReference type="GO" id="GO:0004497">
    <property type="term" value="F:monooxygenase activity"/>
    <property type="evidence" value="ECO:0007669"/>
    <property type="project" value="UniProtKB-KW"/>
</dbReference>
<dbReference type="GO" id="GO:1902086">
    <property type="term" value="P:fumagillin biosynthetic process"/>
    <property type="evidence" value="ECO:0000317"/>
    <property type="project" value="AspGD"/>
</dbReference>
<dbReference type="GO" id="GO:0016114">
    <property type="term" value="P:terpenoid biosynthetic process"/>
    <property type="evidence" value="ECO:0007669"/>
    <property type="project" value="UniProtKB-UniPathway"/>
</dbReference>
<dbReference type="InterPro" id="IPR025444">
    <property type="entry name" value="Monooxy_af470"/>
</dbReference>
<dbReference type="Pfam" id="PF13826">
    <property type="entry name" value="Monooxy_af470-like"/>
    <property type="match status" value="1"/>
</dbReference>
<sequence length="275" mass="31023">MDQSMKPLLSPTERPRRHLTASVISFFLPNQFRLSTILCIGALLQTILCAVLPLRYAAVPCVTVLLISVLTTIQECFQPNTNSFMADVIRGRTTAQIPGKDGTHGREPGKGSVVVFHLGIQYNHPLGVFAPHMREISNRFLAMQQDILRRKDELGLLAVQNWRGSERDSGNTTLIKYFFKDVESIHKFAHEPLHKETWTYYNQHHPGHVGIFHETFITKDGGYESMYVNCHPILLGRGEVKVNNRKDGTEEWVGTLVSADTPGLKSFKARLGRDD</sequence>
<accession>Q4WAZ2</accession>
<feature type="chain" id="PRO_0000437045" description="Monooxygenase af470">
    <location>
        <begin position="1"/>
        <end position="275"/>
    </location>
</feature>
<gene>
    <name evidence="9" type="primary">af470</name>
    <name evidence="10" type="synonym">fmaE</name>
    <name type="ORF">AFUA_8G00470</name>
</gene>
<reference key="1">
    <citation type="journal article" date="2005" name="Nature">
        <title>Genomic sequence of the pathogenic and allergenic filamentous fungus Aspergillus fumigatus.</title>
        <authorList>
            <person name="Nierman W.C."/>
            <person name="Pain A."/>
            <person name="Anderson M.J."/>
            <person name="Wortman J.R."/>
            <person name="Kim H.S."/>
            <person name="Arroyo J."/>
            <person name="Berriman M."/>
            <person name="Abe K."/>
            <person name="Archer D.B."/>
            <person name="Bermejo C."/>
            <person name="Bennett J.W."/>
            <person name="Bowyer P."/>
            <person name="Chen D."/>
            <person name="Collins M."/>
            <person name="Coulsen R."/>
            <person name="Davies R."/>
            <person name="Dyer P.S."/>
            <person name="Farman M.L."/>
            <person name="Fedorova N."/>
            <person name="Fedorova N.D."/>
            <person name="Feldblyum T.V."/>
            <person name="Fischer R."/>
            <person name="Fosker N."/>
            <person name="Fraser A."/>
            <person name="Garcia J.L."/>
            <person name="Garcia M.J."/>
            <person name="Goble A."/>
            <person name="Goldman G.H."/>
            <person name="Gomi K."/>
            <person name="Griffith-Jones S."/>
            <person name="Gwilliam R."/>
            <person name="Haas B.J."/>
            <person name="Haas H."/>
            <person name="Harris D.E."/>
            <person name="Horiuchi H."/>
            <person name="Huang J."/>
            <person name="Humphray S."/>
            <person name="Jimenez J."/>
            <person name="Keller N."/>
            <person name="Khouri H."/>
            <person name="Kitamoto K."/>
            <person name="Kobayashi T."/>
            <person name="Konzack S."/>
            <person name="Kulkarni R."/>
            <person name="Kumagai T."/>
            <person name="Lafton A."/>
            <person name="Latge J.-P."/>
            <person name="Li W."/>
            <person name="Lord A."/>
            <person name="Lu C."/>
            <person name="Majoros W.H."/>
            <person name="May G.S."/>
            <person name="Miller B.L."/>
            <person name="Mohamoud Y."/>
            <person name="Molina M."/>
            <person name="Monod M."/>
            <person name="Mouyna I."/>
            <person name="Mulligan S."/>
            <person name="Murphy L.D."/>
            <person name="O'Neil S."/>
            <person name="Paulsen I."/>
            <person name="Penalva M.A."/>
            <person name="Pertea M."/>
            <person name="Price C."/>
            <person name="Pritchard B.L."/>
            <person name="Quail M.A."/>
            <person name="Rabbinowitsch E."/>
            <person name="Rawlins N."/>
            <person name="Rajandream M.A."/>
            <person name="Reichard U."/>
            <person name="Renauld H."/>
            <person name="Robson G.D."/>
            <person name="Rodriguez de Cordoba S."/>
            <person name="Rodriguez-Pena J.M."/>
            <person name="Ronning C.M."/>
            <person name="Rutter S."/>
            <person name="Salzberg S.L."/>
            <person name="Sanchez M."/>
            <person name="Sanchez-Ferrero J.C."/>
            <person name="Saunders D."/>
            <person name="Seeger K."/>
            <person name="Squares R."/>
            <person name="Squares S."/>
            <person name="Takeuchi M."/>
            <person name="Tekaia F."/>
            <person name="Turner G."/>
            <person name="Vazquez de Aldana C.R."/>
            <person name="Weidman J."/>
            <person name="White O."/>
            <person name="Woodward J.R."/>
            <person name="Yu J.-H."/>
            <person name="Fraser C.M."/>
            <person name="Galagan J.E."/>
            <person name="Asai K."/>
            <person name="Machida M."/>
            <person name="Hall N."/>
            <person name="Barrell B.G."/>
            <person name="Denning D.W."/>
        </authorList>
    </citation>
    <scope>NUCLEOTIDE SEQUENCE [LARGE SCALE GENOMIC DNA]</scope>
    <source>
        <strain>ATCC MYA-4609 / CBS 101355 / FGSC A1100 / Af293</strain>
    </source>
</reference>
<reference key="2">
    <citation type="journal article" date="1952" name="Science">
        <title>The treatment of amebiasis with fumagillin.</title>
        <authorList>
            <person name="Killough J.H."/>
            <person name="Magill G.B."/>
            <person name="Smith R.C."/>
        </authorList>
    </citation>
    <scope>BIOTECHNOLOGY</scope>
</reference>
<reference key="3">
    <citation type="journal article" date="1997" name="Proc. Natl. Acad. Sci. U.S.A.">
        <title>The anti-angiogenic agent fumagillin covalently binds and inhibits the methionine aminopeptidase, MetAP-2.</title>
        <authorList>
            <person name="Sin N."/>
            <person name="Meng L."/>
            <person name="Wang M.Q."/>
            <person name="Wen J.J."/>
            <person name="Bornmann W.G."/>
            <person name="Crews C.M."/>
        </authorList>
    </citation>
    <scope>BIOTECHNOLOGY</scope>
</reference>
<reference key="4">
    <citation type="journal article" date="2002" name="N. Engl. J. Med.">
        <title>Fumagillin treatment of intestinal microsporidiosis.</title>
        <authorList>
            <consortium name="Agence Nationale de Recherches sur le SIDA 090 Study Group"/>
            <person name="Molina J.M."/>
            <person name="Tourneur M."/>
            <person name="Sarfati C."/>
            <person name="Chevret S."/>
            <person name="de Gouvello A."/>
            <person name="Gobert J.G."/>
            <person name="Balkan S."/>
            <person name="Derouin F."/>
        </authorList>
    </citation>
    <scope>BIOTECHNOLOGY</scope>
</reference>
<reference key="5">
    <citation type="journal article" date="2008" name="Inflamm. Res.">
        <title>An inhibitor of methionine aminopeptidase type-2, PPI-2458, ameliorates the pathophysiological disease processes of rheumatoid arthritis.</title>
        <authorList>
            <person name="Lazarus D.D."/>
            <person name="Doyle E.G."/>
            <person name="Bernier S.G."/>
            <person name="Rogers A.B."/>
            <person name="Labenski M.T."/>
            <person name="Wakefield J.D."/>
            <person name="Karp R.M."/>
            <person name="Clark E.J."/>
            <person name="Lorusso J."/>
            <person name="Hoyt J.G."/>
            <person name="Thompson C.D."/>
            <person name="Hannig G."/>
            <person name="Westlin W.F."/>
        </authorList>
    </citation>
    <scope>BIOTECHNOLOGY</scope>
</reference>
<reference key="6">
    <citation type="journal article" date="2013" name="J. Am. Chem. Soc.">
        <title>The fumagillin biosynthetic gene cluster in Aspergillus fumigatus encodes a cryptic terpene cyclase involved in the formation of beta-trans-bergamotene.</title>
        <authorList>
            <person name="Lin H.C."/>
            <person name="Chooi Y.H."/>
            <person name="Dhingra S."/>
            <person name="Xu W."/>
            <person name="Calvo A.M."/>
            <person name="Tang Y."/>
        </authorList>
    </citation>
    <scope>FUNCTION</scope>
</reference>
<reference key="7">
    <citation type="journal article" date="2013" name="PLoS ONE">
        <title>The fumagillin gene cluster, an example of hundreds of genes under veA control in Aspergillus fumigatus.</title>
        <authorList>
            <person name="Dhingra S."/>
            <person name="Lind A.L."/>
            <person name="Lin H.C."/>
            <person name="Tang Y."/>
            <person name="Rokas A."/>
            <person name="Calvo A.M."/>
        </authorList>
    </citation>
    <scope>INDUCTION</scope>
</reference>
<reference key="8">
    <citation type="journal article" date="2013" name="Proc. Natl. Acad. Sci. U.S.A.">
        <title>Prototype of an intertwined secondary-metabolite supercluster.</title>
        <authorList>
            <person name="Wiemann P."/>
            <person name="Guo C.J."/>
            <person name="Palmer J.M."/>
            <person name="Sekonyela R."/>
            <person name="Wang C.C."/>
            <person name="Keller N.P."/>
        </authorList>
    </citation>
    <scope>IDENTIFICATION</scope>
    <scope>INDUCTION</scope>
    <scope>DISRUPTION PHENOTYPE</scope>
</reference>
<reference key="9">
    <citation type="journal article" date="2014" name="J. Am. Chem. Soc.">
        <title>Generation of complexity in fungal terpene biosynthesis: discovery of a multifunctional cytochrome P450 in the fumagillin pathway.</title>
        <authorList>
            <person name="Lin H.C."/>
            <person name="Tsunematsu Y."/>
            <person name="Dhingra S."/>
            <person name="Xu W."/>
            <person name="Fukutomi M."/>
            <person name="Chooi Y.H."/>
            <person name="Cane D.E."/>
            <person name="Calvo A.M."/>
            <person name="Watanabe K."/>
            <person name="Tang Y."/>
        </authorList>
    </citation>
    <scope>FUNCTION</scope>
    <scope>DISRUPTION PHENOTYPE</scope>
    <scope>CATALYTIC ACTIVITY</scope>
</reference>
<comment type="function">
    <text evidence="4 7 13">Monooxygenase; part of the gene cluster that mediates the biosynthesis of fumagillin, a meroterpenoid that has numerous biological activities including irreversible inhibition of human type 2 methionine aminopeptidase (METAP2) (PubMed:23488861, PubMed:24568283). Within the pathway, the monooxygenase af470 catalyzes the oxidative cleavage of prefumagillin to yield the final compound of the pathway, fumagillin (PubMed:24568283). The pathway begins with the conversion of farnesyl pyrophosphate (FPP) to beta-trans-bergamotene by the membrane-bound beta-trans-bergamotene synthase af520. The multifunctional cytochrome P450 monooxygenase af510 then converts beta-trans-bergamotene into 5-keto-demethoxyfumagillol via several oxydation steps. 5-keto-demethoxyfumagillol is then subjected to successive C-6 hydroxylation and O-methylation by the dioxygenase af480 and O-methyltransferase af390-400, respectively, to yield 5-keto-fumagillol, which is then stereoselectively reduced by the keto-reductase af490 to 5R-hydroxy-seco-sesquiterpene. The next step is the polyketide transferase af380-catalyzed transfer of a dodecapentaenoyl group synthesized by the polyketide synthase af370 onto 5R-hydroxy-seco-sesquiterpene which leads to the production of prefumagillin. Finally, oxidative cleavage by the monooxygenase af470 converts prefumagillin to fumagillin (Probable) (PubMed:24568283).</text>
</comment>
<comment type="catalytic activity">
    <reaction evidence="7">
        <text>prefumagillin + NADPH + 2 O2 = fumagillin + acetaldehyde + NADP(+) + H2O</text>
        <dbReference type="Rhea" id="RHEA:74627"/>
        <dbReference type="ChEBI" id="CHEBI:15343"/>
        <dbReference type="ChEBI" id="CHEBI:15377"/>
        <dbReference type="ChEBI" id="CHEBI:15379"/>
        <dbReference type="ChEBI" id="CHEBI:57783"/>
        <dbReference type="ChEBI" id="CHEBI:58349"/>
        <dbReference type="ChEBI" id="CHEBI:193520"/>
        <dbReference type="ChEBI" id="CHEBI:194019"/>
    </reaction>
    <physiologicalReaction direction="left-to-right" evidence="7">
        <dbReference type="Rhea" id="RHEA:74628"/>
    </physiologicalReaction>
</comment>
<comment type="pathway">
    <text evidence="7">Secondary metabolite biosynthesis; terpenoid biosynthesis.</text>
</comment>
<comment type="induction">
    <text evidence="5 6">Expression is controlled by the fumagillin biosynthesis cluster regulator fumR (PubMed:24082142). Expression is also under the control of the developmental and secondary metabolism regulator veA (PubMed:24116213).</text>
</comment>
<comment type="disruption phenotype">
    <text evidence="5 7">Completely abolishes the production of fumagillin but leads to the accumulation of the intermediate prefumagillin (PubMed:24082142, PubMed:24568283).</text>
</comment>
<comment type="biotechnology">
    <text evidence="1 2 3 8">Fumagillin and its derivatives have been intensely studied for their potential use in the treatment of amebiasis, microsporidiosis and rheumatoid arthritis (PubMed:12075057, PubMed:14913169, PubMed:18209961). They have also interesting antiangiogenic properties by the irreversible inhibition of human type 2 methionine aminopeptidase (METAP2) (PubMed:9177176).</text>
</comment>
<proteinExistence type="evidence at protein level"/>
<name>FMAE_ASPFU</name>